<name>H14_HUMAN</name>
<gene>
    <name evidence="13" type="primary">H1-4</name>
    <name evidence="13" type="synonym">H1F4</name>
    <name evidence="13" type="synonym">HIST1H1E</name>
</gene>
<reference key="1">
    <citation type="journal article" date="1991" name="Genomics">
        <title>Isolation and characterization of two human H1 histone genes within clusters of core histone genes.</title>
        <authorList>
            <person name="Albig W."/>
            <person name="Kardalinou E."/>
            <person name="Drabent B."/>
            <person name="Zimmer A."/>
            <person name="Doenecke D."/>
        </authorList>
    </citation>
    <scope>NUCLEOTIDE SEQUENCE [GENOMIC DNA]</scope>
</reference>
<reference key="2">
    <citation type="journal article" date="2002" name="Genomics">
        <title>The human and mouse replication-dependent histone genes.</title>
        <authorList>
            <person name="Marzluff W.F."/>
            <person name="Gongidi P."/>
            <person name="Woods K.R."/>
            <person name="Jin J."/>
            <person name="Maltais L.J."/>
        </authorList>
    </citation>
    <scope>NUCLEOTIDE SEQUENCE [GENOMIC DNA]</scope>
</reference>
<reference key="3">
    <citation type="journal article" date="2003" name="Nature">
        <title>The DNA sequence and analysis of human chromosome 6.</title>
        <authorList>
            <person name="Mungall A.J."/>
            <person name="Palmer S.A."/>
            <person name="Sims S.K."/>
            <person name="Edwards C.A."/>
            <person name="Ashurst J.L."/>
            <person name="Wilming L."/>
            <person name="Jones M.C."/>
            <person name="Horton R."/>
            <person name="Hunt S.E."/>
            <person name="Scott C.E."/>
            <person name="Gilbert J.G.R."/>
            <person name="Clamp M.E."/>
            <person name="Bethel G."/>
            <person name="Milne S."/>
            <person name="Ainscough R."/>
            <person name="Almeida J.P."/>
            <person name="Ambrose K.D."/>
            <person name="Andrews T.D."/>
            <person name="Ashwell R.I.S."/>
            <person name="Babbage A.K."/>
            <person name="Bagguley C.L."/>
            <person name="Bailey J."/>
            <person name="Banerjee R."/>
            <person name="Barker D.J."/>
            <person name="Barlow K.F."/>
            <person name="Bates K."/>
            <person name="Beare D.M."/>
            <person name="Beasley H."/>
            <person name="Beasley O."/>
            <person name="Bird C.P."/>
            <person name="Blakey S.E."/>
            <person name="Bray-Allen S."/>
            <person name="Brook J."/>
            <person name="Brown A.J."/>
            <person name="Brown J.Y."/>
            <person name="Burford D.C."/>
            <person name="Burrill W."/>
            <person name="Burton J."/>
            <person name="Carder C."/>
            <person name="Carter N.P."/>
            <person name="Chapman J.C."/>
            <person name="Clark S.Y."/>
            <person name="Clark G."/>
            <person name="Clee C.M."/>
            <person name="Clegg S."/>
            <person name="Cobley V."/>
            <person name="Collier R.E."/>
            <person name="Collins J.E."/>
            <person name="Colman L.K."/>
            <person name="Corby N.R."/>
            <person name="Coville G.J."/>
            <person name="Culley K.M."/>
            <person name="Dhami P."/>
            <person name="Davies J."/>
            <person name="Dunn M."/>
            <person name="Earthrowl M.E."/>
            <person name="Ellington A.E."/>
            <person name="Evans K.A."/>
            <person name="Faulkner L."/>
            <person name="Francis M.D."/>
            <person name="Frankish A."/>
            <person name="Frankland J."/>
            <person name="French L."/>
            <person name="Garner P."/>
            <person name="Garnett J."/>
            <person name="Ghori M.J."/>
            <person name="Gilby L.M."/>
            <person name="Gillson C.J."/>
            <person name="Glithero R.J."/>
            <person name="Grafham D.V."/>
            <person name="Grant M."/>
            <person name="Gribble S."/>
            <person name="Griffiths C."/>
            <person name="Griffiths M.N.D."/>
            <person name="Hall R."/>
            <person name="Halls K.S."/>
            <person name="Hammond S."/>
            <person name="Harley J.L."/>
            <person name="Hart E.A."/>
            <person name="Heath P.D."/>
            <person name="Heathcott R."/>
            <person name="Holmes S.J."/>
            <person name="Howden P.J."/>
            <person name="Howe K.L."/>
            <person name="Howell G.R."/>
            <person name="Huckle E."/>
            <person name="Humphray S.J."/>
            <person name="Humphries M.D."/>
            <person name="Hunt A.R."/>
            <person name="Johnson C.M."/>
            <person name="Joy A.A."/>
            <person name="Kay M."/>
            <person name="Keenan S.J."/>
            <person name="Kimberley A.M."/>
            <person name="King A."/>
            <person name="Laird G.K."/>
            <person name="Langford C."/>
            <person name="Lawlor S."/>
            <person name="Leongamornlert D.A."/>
            <person name="Leversha M."/>
            <person name="Lloyd C.R."/>
            <person name="Lloyd D.M."/>
            <person name="Loveland J.E."/>
            <person name="Lovell J."/>
            <person name="Martin S."/>
            <person name="Mashreghi-Mohammadi M."/>
            <person name="Maslen G.L."/>
            <person name="Matthews L."/>
            <person name="McCann O.T."/>
            <person name="McLaren S.J."/>
            <person name="McLay K."/>
            <person name="McMurray A."/>
            <person name="Moore M.J.F."/>
            <person name="Mullikin J.C."/>
            <person name="Niblett D."/>
            <person name="Nickerson T."/>
            <person name="Novik K.L."/>
            <person name="Oliver K."/>
            <person name="Overton-Larty E.K."/>
            <person name="Parker A."/>
            <person name="Patel R."/>
            <person name="Pearce A.V."/>
            <person name="Peck A.I."/>
            <person name="Phillimore B.J.C.T."/>
            <person name="Phillips S."/>
            <person name="Plumb R.W."/>
            <person name="Porter K.M."/>
            <person name="Ramsey Y."/>
            <person name="Ranby S.A."/>
            <person name="Rice C.M."/>
            <person name="Ross M.T."/>
            <person name="Searle S.M."/>
            <person name="Sehra H.K."/>
            <person name="Sheridan E."/>
            <person name="Skuce C.D."/>
            <person name="Smith S."/>
            <person name="Smith M."/>
            <person name="Spraggon L."/>
            <person name="Squares S.L."/>
            <person name="Steward C.A."/>
            <person name="Sycamore N."/>
            <person name="Tamlyn-Hall G."/>
            <person name="Tester J."/>
            <person name="Theaker A.J."/>
            <person name="Thomas D.W."/>
            <person name="Thorpe A."/>
            <person name="Tracey A."/>
            <person name="Tromans A."/>
            <person name="Tubby B."/>
            <person name="Wall M."/>
            <person name="Wallis J.M."/>
            <person name="West A.P."/>
            <person name="White S.S."/>
            <person name="Whitehead S.L."/>
            <person name="Whittaker H."/>
            <person name="Wild A."/>
            <person name="Willey D.J."/>
            <person name="Wilmer T.E."/>
            <person name="Wood J.M."/>
            <person name="Wray P.W."/>
            <person name="Wyatt J.C."/>
            <person name="Young L."/>
            <person name="Younger R.M."/>
            <person name="Bentley D.R."/>
            <person name="Coulson A."/>
            <person name="Durbin R.M."/>
            <person name="Hubbard T."/>
            <person name="Sulston J.E."/>
            <person name="Dunham I."/>
            <person name="Rogers J."/>
            <person name="Beck S."/>
        </authorList>
    </citation>
    <scope>NUCLEOTIDE SEQUENCE [LARGE SCALE GENOMIC DNA]</scope>
</reference>
<reference key="4">
    <citation type="journal article" date="2004" name="Genome Res.">
        <title>The status, quality, and expansion of the NIH full-length cDNA project: the Mammalian Gene Collection (MGC).</title>
        <authorList>
            <consortium name="The MGC Project Team"/>
        </authorList>
    </citation>
    <scope>NUCLEOTIDE SEQUENCE [LARGE SCALE MRNA]</scope>
</reference>
<reference key="5">
    <citation type="journal article" date="1986" name="J. Biochem.">
        <title>Human spleen histone H1. Isolation and amino acid sequence of a main variant, H1b.</title>
        <authorList>
            <person name="Ohe Y."/>
            <person name="Hayashi H."/>
            <person name="Iwai K."/>
        </authorList>
    </citation>
    <scope>PROTEIN SEQUENCE OF 2-219</scope>
    <scope>METHYLATION AT LYS-26</scope>
    <source>
        <tissue>Spleen</tissue>
    </source>
</reference>
<reference key="6">
    <citation type="journal article" date="2000" name="Chromosome Res.">
        <title>The distribution of somatic H1 subtypes is non-random on active vs. inactive chromatin: distribution in human fetal fibroblasts.</title>
        <authorList>
            <person name="Parseghian M.H."/>
            <person name="Newcomb R.L."/>
            <person name="Winokur S.T."/>
            <person name="Hamkalo B.A."/>
        </authorList>
    </citation>
    <scope>SUBCELLULAR LOCATION</scope>
</reference>
<reference key="7">
    <citation type="journal article" date="2004" name="Mol. Cell">
        <title>Human SirT1 interacts with histone H1 and promotes formation of facultative heterochromatin.</title>
        <authorList>
            <person name="Vaquero A."/>
            <person name="Scher M."/>
            <person name="Lee D."/>
            <person name="Erdjument-Bromage H."/>
            <person name="Tempst P."/>
            <person name="Reinberg D."/>
        </authorList>
    </citation>
    <scope>ACETYLATION AT LYS-26</scope>
</reference>
<reference key="8">
    <citation type="journal article" date="2005" name="J. Biol. Chem.">
        <title>H1 family histones in the nucleus. Control of binding and localization by the C-terminal domain.</title>
        <authorList>
            <person name="Th'ng J.P."/>
            <person name="Sung R."/>
            <person name="Ye M."/>
            <person name="Hendzel M.J."/>
        </authorList>
    </citation>
    <scope>SUBCELLULAR LOCATION</scope>
</reference>
<reference key="9">
    <citation type="journal article" date="2006" name="Cell">
        <title>Global, in vivo, and site-specific phosphorylation dynamics in signaling networks.</title>
        <authorList>
            <person name="Olsen J.V."/>
            <person name="Blagoev B."/>
            <person name="Gnad F."/>
            <person name="Macek B."/>
            <person name="Kumar C."/>
            <person name="Mortensen P."/>
            <person name="Mann M."/>
        </authorList>
    </citation>
    <scope>PHOSPHORYLATION [LARGE SCALE ANALYSIS] AT THR-18 AND SER-187</scope>
    <scope>IDENTIFICATION BY MASS SPECTROMETRY [LARGE SCALE ANALYSIS]</scope>
    <source>
        <tissue>Cervix carcinoma</tissue>
    </source>
</reference>
<reference key="10">
    <citation type="journal article" date="2008" name="Mol. Cell">
        <title>Kinase-selective enrichment enables quantitative phosphoproteomics of the kinome across the cell cycle.</title>
        <authorList>
            <person name="Daub H."/>
            <person name="Olsen J.V."/>
            <person name="Bairlein M."/>
            <person name="Gnad F."/>
            <person name="Oppermann F.S."/>
            <person name="Korner R."/>
            <person name="Greff Z."/>
            <person name="Keri G."/>
            <person name="Stemmann O."/>
            <person name="Mann M."/>
        </authorList>
    </citation>
    <scope>PHOSPHORYLATION [LARGE SCALE ANALYSIS] AT THR-18</scope>
    <scope>IDENTIFICATION BY MASS SPECTROMETRY [LARGE SCALE ANALYSIS]</scope>
    <source>
        <tissue>Cervix carcinoma</tissue>
    </source>
</reference>
<reference key="11">
    <citation type="journal article" date="2008" name="Proc. Natl. Acad. Sci. U.S.A.">
        <title>A quantitative atlas of mitotic phosphorylation.</title>
        <authorList>
            <person name="Dephoure N."/>
            <person name="Zhou C."/>
            <person name="Villen J."/>
            <person name="Beausoleil S.A."/>
            <person name="Bakalarski C.E."/>
            <person name="Elledge S.J."/>
            <person name="Gygi S.P."/>
        </authorList>
    </citation>
    <scope>PHOSPHORYLATION [LARGE SCALE ANALYSIS] AT THR-18</scope>
    <scope>IDENTIFICATION BY MASS SPECTROMETRY [LARGE SCALE ANALYSIS]</scope>
    <source>
        <tissue>Cervix carcinoma</tissue>
    </source>
</reference>
<reference key="12">
    <citation type="journal article" date="2009" name="Anal. Chem.">
        <title>Lys-N and trypsin cover complementary parts of the phosphoproteome in a refined SCX-based approach.</title>
        <authorList>
            <person name="Gauci S."/>
            <person name="Helbig A.O."/>
            <person name="Slijper M."/>
            <person name="Krijgsveld J."/>
            <person name="Heck A.J."/>
            <person name="Mohammed S."/>
        </authorList>
    </citation>
    <scope>ACETYLATION [LARGE SCALE ANALYSIS] AT SER-2</scope>
    <scope>CLEAVAGE OF INITIATOR METHIONINE [LARGE SCALE ANALYSIS]</scope>
    <scope>IDENTIFICATION BY MASS SPECTROMETRY [LARGE SCALE ANALYSIS]</scope>
</reference>
<reference key="13">
    <citation type="journal article" date="2010" name="Sci. Signal.">
        <title>Quantitative phosphoproteomics reveals widespread full phosphorylation site occupancy during mitosis.</title>
        <authorList>
            <person name="Olsen J.V."/>
            <person name="Vermeulen M."/>
            <person name="Santamaria A."/>
            <person name="Kumar C."/>
            <person name="Miller M.L."/>
            <person name="Jensen L.J."/>
            <person name="Gnad F."/>
            <person name="Cox J."/>
            <person name="Jensen T.S."/>
            <person name="Nigg E.A."/>
            <person name="Brunak S."/>
            <person name="Mann M."/>
        </authorList>
    </citation>
    <scope>ACETYLATION [LARGE SCALE ANALYSIS] AT SER-2</scope>
    <scope>PHOSPHORYLATION [LARGE SCALE ANALYSIS] AT THR-18; THR-146 AND SER-187</scope>
    <scope>CLEAVAGE OF INITIATOR METHIONINE [LARGE SCALE ANALYSIS]</scope>
    <scope>IDENTIFICATION BY MASS SPECTROMETRY [LARGE SCALE ANALYSIS]</scope>
    <source>
        <tissue>Cervix carcinoma</tissue>
    </source>
</reference>
<reference key="14">
    <citation type="journal article" date="2011" name="BMC Syst. Biol.">
        <title>Initial characterization of the human central proteome.</title>
        <authorList>
            <person name="Burkard T.R."/>
            <person name="Planyavsky M."/>
            <person name="Kaupe I."/>
            <person name="Breitwieser F.P."/>
            <person name="Buerckstuemmer T."/>
            <person name="Bennett K.L."/>
            <person name="Superti-Furga G."/>
            <person name="Colinge J."/>
        </authorList>
    </citation>
    <scope>IDENTIFICATION BY MASS SPECTROMETRY [LARGE SCALE ANALYSIS]</scope>
</reference>
<reference key="15">
    <citation type="journal article" date="2011" name="Sci. Signal.">
        <title>System-wide temporal characterization of the proteome and phosphoproteome of human embryonic stem cell differentiation.</title>
        <authorList>
            <person name="Rigbolt K.T."/>
            <person name="Prokhorova T.A."/>
            <person name="Akimov V."/>
            <person name="Henningsen J."/>
            <person name="Johansen P.T."/>
            <person name="Kratchmarova I."/>
            <person name="Kassem M."/>
            <person name="Mann M."/>
            <person name="Olsen J.V."/>
            <person name="Blagoev B."/>
        </authorList>
    </citation>
    <scope>ACETYLATION [LARGE SCALE ANALYSIS] AT SER-2</scope>
    <scope>PHOSPHORYLATION [LARGE SCALE ANALYSIS] AT THR-18 AND SER-187</scope>
    <scope>CLEAVAGE OF INITIATOR METHIONINE [LARGE SCALE ANALYSIS]</scope>
    <scope>IDENTIFICATION BY MASS SPECTROMETRY [LARGE SCALE ANALYSIS]</scope>
</reference>
<reference key="16">
    <citation type="journal article" date="2012" name="Mol. Cell. Proteomics">
        <title>Comparative large-scale characterisation of plant vs. mammal proteins reveals similar and idiosyncratic N-alpha acetylation features.</title>
        <authorList>
            <person name="Bienvenut W.V."/>
            <person name="Sumpton D."/>
            <person name="Martinez A."/>
            <person name="Lilla S."/>
            <person name="Espagne C."/>
            <person name="Meinnel T."/>
            <person name="Giglione C."/>
        </authorList>
    </citation>
    <scope>ACETYLATION [LARGE SCALE ANALYSIS] AT SER-2</scope>
    <scope>CLEAVAGE OF INITIATOR METHIONINE [LARGE SCALE ANALYSIS]</scope>
    <scope>IDENTIFICATION BY MASS SPECTROMETRY [LARGE SCALE ANALYSIS]</scope>
</reference>
<reference key="17">
    <citation type="journal article" date="2012" name="Proc. Natl. Acad. Sci. U.S.A.">
        <title>N-terminal acetylome analyses and functional insights of the N-terminal acetyltransferase NatB.</title>
        <authorList>
            <person name="Van Damme P."/>
            <person name="Lasa M."/>
            <person name="Polevoda B."/>
            <person name="Gazquez C."/>
            <person name="Elosegui-Artola A."/>
            <person name="Kim D.S."/>
            <person name="De Juan-Pardo E."/>
            <person name="Demeyer K."/>
            <person name="Hole K."/>
            <person name="Larrea E."/>
            <person name="Timmerman E."/>
            <person name="Prieto J."/>
            <person name="Arnesen T."/>
            <person name="Sherman F."/>
            <person name="Gevaert K."/>
            <person name="Aldabe R."/>
        </authorList>
    </citation>
    <scope>ACETYLATION [LARGE SCALE ANALYSIS] AT SER-2</scope>
    <scope>CLEAVAGE OF INITIATOR METHIONINE [LARGE SCALE ANALYSIS]</scope>
    <scope>IDENTIFICATION BY MASS SPECTROMETRY [LARGE SCALE ANALYSIS]</scope>
</reference>
<reference key="18">
    <citation type="journal article" date="2013" name="J. Proteome Res.">
        <title>Toward a comprehensive characterization of a human cancer cell phosphoproteome.</title>
        <authorList>
            <person name="Zhou H."/>
            <person name="Di Palma S."/>
            <person name="Preisinger C."/>
            <person name="Peng M."/>
            <person name="Polat A.N."/>
            <person name="Heck A.J."/>
            <person name="Mohammed S."/>
        </authorList>
    </citation>
    <scope>PHOSPHORYLATION [LARGE SCALE ANALYSIS] AT THR-18</scope>
    <scope>IDENTIFICATION BY MASS SPECTROMETRY [LARGE SCALE ANALYSIS]</scope>
    <source>
        <tissue>Cervix carcinoma</tissue>
        <tissue>Erythroleukemia</tissue>
    </source>
</reference>
<reference key="19">
    <citation type="journal article" date="2014" name="J. Proteomics">
        <title>An enzyme assisted RP-RPLC approach for in-depth analysis of human liver phosphoproteome.</title>
        <authorList>
            <person name="Bian Y."/>
            <person name="Song C."/>
            <person name="Cheng K."/>
            <person name="Dong M."/>
            <person name="Wang F."/>
            <person name="Huang J."/>
            <person name="Sun D."/>
            <person name="Wang L."/>
            <person name="Ye M."/>
            <person name="Zou H."/>
        </authorList>
    </citation>
    <scope>PHOSPHORYLATION [LARGE SCALE ANALYSIS] AT THR-18</scope>
    <scope>IDENTIFICATION BY MASS SPECTROMETRY [LARGE SCALE ANALYSIS]</scope>
    <source>
        <tissue>Liver</tissue>
    </source>
</reference>
<reference key="20">
    <citation type="journal article" date="2015" name="Proteomics">
        <title>N-terminome analysis of the human mitochondrial proteome.</title>
        <authorList>
            <person name="Vaca Jacome A.S."/>
            <person name="Rabilloud T."/>
            <person name="Schaeffer-Reiss C."/>
            <person name="Rompais M."/>
            <person name="Ayoub D."/>
            <person name="Lane L."/>
            <person name="Bairoch A."/>
            <person name="Van Dorsselaer A."/>
            <person name="Carapito C."/>
        </authorList>
    </citation>
    <scope>ACETYLATION [LARGE SCALE ANALYSIS] AT SER-2</scope>
    <scope>CLEAVAGE OF INITIATOR METHIONINE [LARGE SCALE ANALYSIS]</scope>
    <scope>IDENTIFICATION BY MASS SPECTROMETRY [LARGE SCALE ANALYSIS]</scope>
</reference>
<reference key="21">
    <citation type="journal article" date="2016" name="Nat. Chem. Biol.">
        <title>Serine is a new target residue for endogenous ADP-ribosylation on histones.</title>
        <authorList>
            <person name="Leidecker O."/>
            <person name="Bonfiglio J.J."/>
            <person name="Colby T."/>
            <person name="Zhang Q."/>
            <person name="Atanassov I."/>
            <person name="Zaja R."/>
            <person name="Palazzo L."/>
            <person name="Stockum A."/>
            <person name="Ahel I."/>
            <person name="Matic I."/>
        </authorList>
    </citation>
    <scope>ADP-RIBOSYLATION AT SER-150</scope>
</reference>
<reference key="22">
    <citation type="journal article" date="2017" name="Am. J. Hum. Genet.">
        <title>Mutations in epigenetic regulation genes are a major cause of overgrowth with intellectual disability.</title>
        <authorList>
            <consortium name="Childhood Overgrowth Collaboration"/>
            <person name="Tatton-Brown K."/>
            <person name="Loveday C."/>
            <person name="Yost S."/>
            <person name="Clarke M."/>
            <person name="Ramsay E."/>
            <person name="Zachariou A."/>
            <person name="Elliott A."/>
            <person name="Wylie H."/>
            <person name="Ardissone A."/>
            <person name="Rittinger O."/>
            <person name="Stewart F."/>
            <person name="Temple I.K."/>
            <person name="Cole T."/>
            <person name="Mahamdallie S."/>
            <person name="Seal S."/>
            <person name="Ruark E."/>
            <person name="Rahman N."/>
        </authorList>
    </citation>
    <scope>INVOLVEMENT IN RMNS</scope>
</reference>
<reference key="23">
    <citation type="journal article" date="2006" name="Science">
        <title>The consensus coding sequences of human breast and colorectal cancers.</title>
        <authorList>
            <person name="Sjoeblom T."/>
            <person name="Jones S."/>
            <person name="Wood L.D."/>
            <person name="Parsons D.W."/>
            <person name="Lin J."/>
            <person name="Barber T.D."/>
            <person name="Mandelker D."/>
            <person name="Leary R.J."/>
            <person name="Ptak J."/>
            <person name="Silliman N."/>
            <person name="Szabo S."/>
            <person name="Buckhaults P."/>
            <person name="Farrell C."/>
            <person name="Meeh P."/>
            <person name="Markowitz S.D."/>
            <person name="Willis J."/>
            <person name="Dawson D."/>
            <person name="Willson J.K.V."/>
            <person name="Gazdar A.F."/>
            <person name="Hartigan J."/>
            <person name="Wu L."/>
            <person name="Liu C."/>
            <person name="Parmigiani G."/>
            <person name="Park B.H."/>
            <person name="Bachman K.E."/>
            <person name="Papadopoulos N."/>
            <person name="Vogelstein B."/>
            <person name="Kinzler K.W."/>
            <person name="Velculescu V.E."/>
        </authorList>
    </citation>
    <scope>VARIANT [LARGE SCALE ANALYSIS] VAL-128</scope>
</reference>
<comment type="function">
    <text evidence="1">Histone H1 protein binds to linker DNA between nucleosomes forming the macromolecular structure known as the chromatin fiber. Histones H1 are necessary for the condensation of nucleosome chains into higher-order structured fibers. Also acts as a regulator of individual gene transcription through chromatin remodeling, nucleosome spacing and DNA methylation (By similarity).</text>
</comment>
<comment type="interaction">
    <interactant intactId="EBI-358163">
        <id>P10412</id>
    </interactant>
    <interactant intactId="EBI-927482">
        <id>Q9UIG0</id>
        <label>BAZ1B</label>
    </interactant>
    <organismsDiffer>false</organismsDiffer>
    <experiments>2</experiments>
</comment>
<comment type="interaction">
    <interactant intactId="EBI-358163">
        <id>P10412</id>
    </interactant>
    <interactant intactId="EBI-744088">
        <id>Q8IY81</id>
        <label>FTSJ3</label>
    </interactant>
    <organismsDiffer>false</organismsDiffer>
    <experiments>4</experiments>
</comment>
<comment type="interaction">
    <interactant intactId="EBI-358163">
        <id>P10412</id>
    </interactant>
    <interactant intactId="EBI-1056125">
        <id>Q16778</id>
        <label>H2BC21</label>
    </interactant>
    <organismsDiffer>false</organismsDiffer>
    <experiments>2</experiments>
</comment>
<comment type="interaction">
    <interactant intactId="EBI-358163">
        <id>P10412</id>
    </interactant>
    <interactant intactId="EBI-1265089">
        <id>Q9Y468</id>
        <label>L3MBTL1</label>
    </interactant>
    <organismsDiffer>false</organismsDiffer>
    <experiments>7</experiments>
</comment>
<comment type="interaction">
    <interactant intactId="EBI-358163">
        <id>P10412</id>
    </interactant>
    <interactant intactId="EBI-389883">
        <id>P16333</id>
        <label>NCK1</label>
    </interactant>
    <organismsDiffer>false</organismsDiffer>
    <experiments>2</experiments>
</comment>
<comment type="interaction">
    <interactant intactId="EBI-358163">
        <id>P10412</id>
    </interactant>
    <interactant intactId="EBI-356746">
        <id>P50914</id>
        <label>RPL14</label>
    </interactant>
    <organismsDiffer>false</organismsDiffer>
    <experiments>2</experiments>
</comment>
<comment type="interaction">
    <interactant intactId="EBI-358163">
        <id>P10412</id>
    </interactant>
    <interactant intactId="EBI-2682386">
        <id>Q96PV0</id>
        <label>SYNGAP1</label>
    </interactant>
    <organismsDiffer>false</organismsDiffer>
    <experiments>2</experiments>
</comment>
<comment type="interaction">
    <interactant intactId="EBI-358163">
        <id>P10412</id>
    </interactant>
    <interactant intactId="EBI-714067">
        <id>Q9NQZ2</id>
        <label>UTP3</label>
    </interactant>
    <organismsDiffer>false</organismsDiffer>
    <experiments>2</experiments>
</comment>
<comment type="interaction">
    <interactant intactId="EBI-358163">
        <id>P10412</id>
    </interactant>
    <interactant intactId="EBI-25475856">
        <id>P0DTC9</id>
        <label>N</label>
    </interactant>
    <organismsDiffer>true</organismsDiffer>
    <experiments>5</experiments>
</comment>
<comment type="subcellular location">
    <subcellularLocation>
        <location>Nucleus</location>
    </subcellularLocation>
    <subcellularLocation>
        <location>Chromosome</location>
    </subcellularLocation>
    <text>Mainly localizes in heterochromatin. Dysplays a punctuate staining pattern in the nucleus.</text>
</comment>
<comment type="domain">
    <text evidence="1">The C-terminal domain is required for high-affinity binding to chromatin.</text>
</comment>
<comment type="PTM">
    <text evidence="4">H1 histones are progressively phosphorylated during the cell cycle, becoming maximally phosphorylated during late G2 phase and M phase, and being dephosphorylated sharply thereafter.</text>
</comment>
<comment type="PTM">
    <text evidence="8">Acetylated at Lys-26. Deacetylated at Lys-26 by SIRT1.</text>
</comment>
<comment type="PTM">
    <text evidence="3">Citrullination at Arg-54 (H1R54ci) by PADI4 takes place within the DNA-binding site of H1 and results in its displacement from chromatin and global chromatin decondensation, thereby promoting pluripotency and stem cell maintenance.</text>
</comment>
<comment type="PTM">
    <text evidence="10">ADP-ribosylated on Ser-150 in response to DNA damage.</text>
</comment>
<comment type="disease" evidence="11">
    <disease id="DI-05023">
        <name>Rahman syndrome</name>
        <acronym>RMNS</acronym>
        <description>An autosomal dominant syndrome characterized by intellectual disability and overgrowth manifesting as increased birth length, height, weight, and/or head circumference.</description>
        <dbReference type="MIM" id="617537"/>
    </disease>
    <text>The disease is caused by variants affecting the gene represented in this entry.</text>
</comment>
<comment type="miscellaneous">
    <text>This variant accounts for 60% of histone H1.</text>
</comment>
<comment type="similarity">
    <text evidence="6">Belongs to the histone H1/H5 family.</text>
</comment>
<keyword id="KW-0002">3D-structure</keyword>
<keyword id="KW-0007">Acetylation</keyword>
<keyword id="KW-0013">ADP-ribosylation</keyword>
<keyword id="KW-0158">Chromosome</keyword>
<keyword id="KW-0164">Citrullination</keyword>
<keyword id="KW-0903">Direct protein sequencing</keyword>
<keyword id="KW-0238">DNA-binding</keyword>
<keyword id="KW-0379">Hydroxylation</keyword>
<keyword id="KW-0991">Intellectual disability</keyword>
<keyword id="KW-0488">Methylation</keyword>
<keyword id="KW-0539">Nucleus</keyword>
<keyword id="KW-0597">Phosphoprotein</keyword>
<keyword id="KW-1267">Proteomics identification</keyword>
<keyword id="KW-1185">Reference proteome</keyword>
<organism>
    <name type="scientific">Homo sapiens</name>
    <name type="common">Human</name>
    <dbReference type="NCBI Taxonomy" id="9606"/>
    <lineage>
        <taxon>Eukaryota</taxon>
        <taxon>Metazoa</taxon>
        <taxon>Chordata</taxon>
        <taxon>Craniata</taxon>
        <taxon>Vertebrata</taxon>
        <taxon>Euteleostomi</taxon>
        <taxon>Mammalia</taxon>
        <taxon>Eutheria</taxon>
        <taxon>Euarchontoglires</taxon>
        <taxon>Primates</taxon>
        <taxon>Haplorrhini</taxon>
        <taxon>Catarrhini</taxon>
        <taxon>Hominidae</taxon>
        <taxon>Homo</taxon>
    </lineage>
</organism>
<protein>
    <recommendedName>
        <fullName>Histone H1.4</fullName>
    </recommendedName>
    <alternativeName>
        <fullName>Histone H1b</fullName>
    </alternativeName>
    <alternativeName>
        <fullName>Histone H1s-4</fullName>
    </alternativeName>
</protein>
<proteinExistence type="evidence at protein level"/>
<dbReference type="EMBL" id="M60748">
    <property type="protein sequence ID" value="AAA63187.1"/>
    <property type="molecule type" value="Genomic_DNA"/>
</dbReference>
<dbReference type="EMBL" id="AF531302">
    <property type="protein sequence ID" value="AAN06702.1"/>
    <property type="molecule type" value="Genomic_DNA"/>
</dbReference>
<dbReference type="EMBL" id="AL353759">
    <property type="status" value="NOT_ANNOTATED_CDS"/>
    <property type="molecule type" value="Genomic_DNA"/>
</dbReference>
<dbReference type="EMBL" id="BC096168">
    <property type="protein sequence ID" value="AAH96168.1"/>
    <property type="molecule type" value="mRNA"/>
</dbReference>
<dbReference type="EMBL" id="BC096169">
    <property type="protein sequence ID" value="AAH96169.1"/>
    <property type="molecule type" value="mRNA"/>
</dbReference>
<dbReference type="EMBL" id="BC099632">
    <property type="protein sequence ID" value="AAH99632.1"/>
    <property type="molecule type" value="mRNA"/>
</dbReference>
<dbReference type="CCDS" id="CCDS4586.1"/>
<dbReference type="PIR" id="C40335">
    <property type="entry name" value="HSHU1B"/>
</dbReference>
<dbReference type="RefSeq" id="NP_005312.1">
    <property type="nucleotide sequence ID" value="NM_005321.3"/>
</dbReference>
<dbReference type="PDB" id="3TZD">
    <property type="method" value="X-ray"/>
    <property type="resolution" value="1.81 A"/>
    <property type="chains" value="T=19-36"/>
</dbReference>
<dbReference type="PDB" id="5JJZ">
    <property type="method" value="X-ray"/>
    <property type="resolution" value="2.00 A"/>
    <property type="chains" value="B=21-32"/>
</dbReference>
<dbReference type="PDB" id="6H8P">
    <property type="method" value="X-ray"/>
    <property type="resolution" value="1.98 A"/>
    <property type="chains" value="C/D=18-32"/>
</dbReference>
<dbReference type="PDB" id="7K5Y">
    <property type="method" value="EM"/>
    <property type="resolution" value="2.76 A"/>
    <property type="chains" value="U=1-219"/>
</dbReference>
<dbReference type="PDB" id="7K63">
    <property type="method" value="EM"/>
    <property type="resolution" value="3.03 A"/>
    <property type="chains" value="U=1-35, U=111-219"/>
</dbReference>
<dbReference type="PDB" id="7PET">
    <property type="method" value="EM"/>
    <property type="resolution" value="9.50 A"/>
    <property type="chains" value="s/u=2-219"/>
</dbReference>
<dbReference type="PDB" id="7PEU">
    <property type="method" value="EM"/>
    <property type="resolution" value="7.20 A"/>
    <property type="chains" value="u=2-219"/>
</dbReference>
<dbReference type="PDB" id="7PEX">
    <property type="method" value="EM"/>
    <property type="resolution" value="5.10 A"/>
    <property type="chains" value="u=2-219"/>
</dbReference>
<dbReference type="PDB" id="7PEZ">
    <property type="method" value="EM"/>
    <property type="resolution" value="7.90 A"/>
    <property type="chains" value="s=2-219"/>
</dbReference>
<dbReference type="PDB" id="7PF0">
    <property type="method" value="EM"/>
    <property type="resolution" value="11.00 A"/>
    <property type="chains" value="U/u=2-219"/>
</dbReference>
<dbReference type="PDB" id="7PF2">
    <property type="method" value="EM"/>
    <property type="resolution" value="5.10 A"/>
    <property type="chains" value="U=2-219"/>
</dbReference>
<dbReference type="PDB" id="7PF3">
    <property type="method" value="EM"/>
    <property type="resolution" value="4.00 A"/>
    <property type="chains" value="s=2-219"/>
</dbReference>
<dbReference type="PDB" id="7PF5">
    <property type="method" value="EM"/>
    <property type="resolution" value="3.80 A"/>
    <property type="chains" value="u=2-219"/>
</dbReference>
<dbReference type="PDB" id="7PF6">
    <property type="method" value="EM"/>
    <property type="resolution" value="4.00 A"/>
    <property type="chains" value="U=2-219"/>
</dbReference>
<dbReference type="PDB" id="7PFA">
    <property type="method" value="EM"/>
    <property type="resolution" value="9.70 A"/>
    <property type="chains" value="U/u=2-219"/>
</dbReference>
<dbReference type="PDB" id="7PFC">
    <property type="method" value="EM"/>
    <property type="resolution" value="6.40 A"/>
    <property type="chains" value="U=2-219"/>
</dbReference>
<dbReference type="PDB" id="7PFD">
    <property type="method" value="EM"/>
    <property type="resolution" value="4.40 A"/>
    <property type="chains" value="U=2-219"/>
</dbReference>
<dbReference type="PDB" id="7PFE">
    <property type="method" value="EM"/>
    <property type="resolution" value="4.40 A"/>
    <property type="chains" value="u=2-219"/>
</dbReference>
<dbReference type="PDB" id="7PFT">
    <property type="method" value="EM"/>
    <property type="resolution" value="9.80 A"/>
    <property type="chains" value="S/U/u=2-219"/>
</dbReference>
<dbReference type="PDB" id="7PFU">
    <property type="method" value="EM"/>
    <property type="resolution" value="5.00 A"/>
    <property type="chains" value="S/U=2-219"/>
</dbReference>
<dbReference type="PDB" id="7PFV">
    <property type="method" value="EM"/>
    <property type="resolution" value="4.40 A"/>
    <property type="chains" value="U=2-219"/>
</dbReference>
<dbReference type="PDB" id="7PFW">
    <property type="method" value="EM"/>
    <property type="resolution" value="5.20 A"/>
    <property type="chains" value="u=2-219"/>
</dbReference>
<dbReference type="PDB" id="7PFX">
    <property type="method" value="EM"/>
    <property type="resolution" value="4.30 A"/>
    <property type="chains" value="S=2-219"/>
</dbReference>
<dbReference type="PDB" id="8H1T">
    <property type="method" value="EM"/>
    <property type="resolution" value="3.00 A"/>
    <property type="chains" value="K=1-219"/>
</dbReference>
<dbReference type="PDB" id="8VG2">
    <property type="method" value="EM"/>
    <property type="resolution" value="3.04 A"/>
    <property type="chains" value="U=1-219"/>
</dbReference>
<dbReference type="PDB" id="9DDE">
    <property type="method" value="EM"/>
    <property type="resolution" value="3.20 A"/>
    <property type="chains" value="O=1-219"/>
</dbReference>
<dbReference type="PDBsum" id="3TZD"/>
<dbReference type="PDBsum" id="5JJZ"/>
<dbReference type="PDBsum" id="6H8P"/>
<dbReference type="PDBsum" id="7K5Y"/>
<dbReference type="PDBsum" id="7K63"/>
<dbReference type="PDBsum" id="7PET"/>
<dbReference type="PDBsum" id="7PEU"/>
<dbReference type="PDBsum" id="7PEX"/>
<dbReference type="PDBsum" id="7PEZ"/>
<dbReference type="PDBsum" id="7PF0"/>
<dbReference type="PDBsum" id="7PF2"/>
<dbReference type="PDBsum" id="7PF3"/>
<dbReference type="PDBsum" id="7PF5"/>
<dbReference type="PDBsum" id="7PF6"/>
<dbReference type="PDBsum" id="7PFA"/>
<dbReference type="PDBsum" id="7PFC"/>
<dbReference type="PDBsum" id="7PFD"/>
<dbReference type="PDBsum" id="7PFE"/>
<dbReference type="PDBsum" id="7PFT"/>
<dbReference type="PDBsum" id="7PFU"/>
<dbReference type="PDBsum" id="7PFV"/>
<dbReference type="PDBsum" id="7PFW"/>
<dbReference type="PDBsum" id="7PFX"/>
<dbReference type="PDBsum" id="8H1T"/>
<dbReference type="PDBsum" id="8VG2"/>
<dbReference type="PDBsum" id="9DDE"/>
<dbReference type="EMDB" id="EMD-13356"/>
<dbReference type="EMDB" id="EMD-13357"/>
<dbReference type="EMDB" id="EMD-13360"/>
<dbReference type="EMDB" id="EMD-13362"/>
<dbReference type="EMDB" id="EMD-13363"/>
<dbReference type="EMDB" id="EMD-13365"/>
<dbReference type="EMDB" id="EMD-13366"/>
<dbReference type="EMDB" id="EMD-13368"/>
<dbReference type="EMDB" id="EMD-13369"/>
<dbReference type="EMDB" id="EMD-13370"/>
<dbReference type="EMDB" id="EMD-13371"/>
<dbReference type="EMDB" id="EMD-13372"/>
<dbReference type="EMDB" id="EMD-13373"/>
<dbReference type="EMDB" id="EMD-13379"/>
<dbReference type="EMDB" id="EMD-13380"/>
<dbReference type="EMDB" id="EMD-13381"/>
<dbReference type="EMDB" id="EMD-13382"/>
<dbReference type="EMDB" id="EMD-13383"/>
<dbReference type="EMDB" id="EMD-22684"/>
<dbReference type="EMDB" id="EMD-22688"/>
<dbReference type="EMDB" id="EMD-34431"/>
<dbReference type="EMDB" id="EMD-43198"/>
<dbReference type="EMDB" id="EMD-46771"/>
<dbReference type="SMR" id="P10412"/>
<dbReference type="BioGRID" id="109263">
    <property type="interactions" value="677"/>
</dbReference>
<dbReference type="FunCoup" id="P10412">
    <property type="interactions" value="799"/>
</dbReference>
<dbReference type="IntAct" id="P10412">
    <property type="interactions" value="374"/>
</dbReference>
<dbReference type="MINT" id="P10412"/>
<dbReference type="STRING" id="9606.ENSP00000307705"/>
<dbReference type="DrugBank" id="DB09130">
    <property type="generic name" value="Copper"/>
</dbReference>
<dbReference type="GlyGen" id="P10412">
    <property type="glycosylation" value="2 sites, 1 N-linked glycan (1 site), 1 O-linked glycan (1 site)"/>
</dbReference>
<dbReference type="iPTMnet" id="P10412"/>
<dbReference type="PhosphoSitePlus" id="P10412"/>
<dbReference type="SwissPalm" id="P10412"/>
<dbReference type="BioMuta" id="HIST1H1E"/>
<dbReference type="DMDM" id="121919"/>
<dbReference type="jPOST" id="P10412"/>
<dbReference type="MassIVE" id="P10412"/>
<dbReference type="PaxDb" id="9606-ENSP00000307705"/>
<dbReference type="PeptideAtlas" id="P10412"/>
<dbReference type="PRIDE" id="P10412"/>
<dbReference type="ProteomicsDB" id="52602"/>
<dbReference type="Pumba" id="P10412"/>
<dbReference type="TopDownProteomics" id="P10412"/>
<dbReference type="Antibodypedia" id="25545">
    <property type="antibodies" value="437 antibodies from 22 providers"/>
</dbReference>
<dbReference type="DNASU" id="3008"/>
<dbReference type="Ensembl" id="ENST00000304218.6">
    <property type="protein sequence ID" value="ENSP00000307705.4"/>
    <property type="gene ID" value="ENSG00000168298.7"/>
</dbReference>
<dbReference type="GeneID" id="3008"/>
<dbReference type="KEGG" id="hsa:3008"/>
<dbReference type="MANE-Select" id="ENST00000304218.6">
    <property type="protein sequence ID" value="ENSP00000307705.4"/>
    <property type="RefSeq nucleotide sequence ID" value="NM_005321.3"/>
    <property type="RefSeq protein sequence ID" value="NP_005312.1"/>
</dbReference>
<dbReference type="UCSC" id="uc003ngq.4">
    <property type="organism name" value="human"/>
</dbReference>
<dbReference type="AGR" id="HGNC:4718"/>
<dbReference type="CTD" id="3008"/>
<dbReference type="DisGeNET" id="3008"/>
<dbReference type="GeneCards" id="H1-4"/>
<dbReference type="GeneReviews" id="H1-4"/>
<dbReference type="HGNC" id="HGNC:4718">
    <property type="gene designation" value="H1-4"/>
</dbReference>
<dbReference type="HPA" id="ENSG00000168298">
    <property type="expression patterns" value="Tissue enriched (bone)"/>
</dbReference>
<dbReference type="MalaCards" id="H1-4"/>
<dbReference type="MIM" id="142220">
    <property type="type" value="gene"/>
</dbReference>
<dbReference type="MIM" id="617537">
    <property type="type" value="phenotype"/>
</dbReference>
<dbReference type="neXtProt" id="NX_P10412"/>
<dbReference type="OpenTargets" id="ENSG00000168298"/>
<dbReference type="Orphanet" id="642763">
    <property type="disease" value="Autosomal dominant intellectual disability-craniofacial dysmorphism-macrocephaly-hypotonia syndrome due to H1-4 mutation"/>
</dbReference>
<dbReference type="VEuPathDB" id="HostDB:ENSG00000168298"/>
<dbReference type="eggNOG" id="KOG4012">
    <property type="taxonomic scope" value="Eukaryota"/>
</dbReference>
<dbReference type="GeneTree" id="ENSGT00940000155501"/>
<dbReference type="HOGENOM" id="CLU_052897_7_0_1"/>
<dbReference type="InParanoid" id="P10412"/>
<dbReference type="OMA" id="MISECIA"/>
<dbReference type="OrthoDB" id="9634976at2759"/>
<dbReference type="PAN-GO" id="P10412">
    <property type="GO annotations" value="5 GO annotations based on evolutionary models"/>
</dbReference>
<dbReference type="PhylomeDB" id="P10412"/>
<dbReference type="TreeFam" id="TF313664"/>
<dbReference type="PathwayCommons" id="P10412"/>
<dbReference type="Reactome" id="R-HSA-140342">
    <property type="pathway name" value="Apoptosis induced DNA fragmentation"/>
</dbReference>
<dbReference type="Reactome" id="R-HSA-2559584">
    <property type="pathway name" value="Formation of Senescence-Associated Heterochromatin Foci (SAHF)"/>
</dbReference>
<dbReference type="SignaLink" id="P10412"/>
<dbReference type="SIGNOR" id="P10412"/>
<dbReference type="BioGRID-ORCS" id="3008">
    <property type="hits" value="75 hits in 1154 CRISPR screens"/>
</dbReference>
<dbReference type="CD-CODE" id="232F8A39">
    <property type="entry name" value="P-body"/>
</dbReference>
<dbReference type="CD-CODE" id="91857CE7">
    <property type="entry name" value="Nucleolus"/>
</dbReference>
<dbReference type="ChiTaRS" id="HIST1H1E">
    <property type="organism name" value="human"/>
</dbReference>
<dbReference type="EvolutionaryTrace" id="P10412"/>
<dbReference type="GeneWiki" id="HIST1H1E"/>
<dbReference type="GenomeRNAi" id="3008"/>
<dbReference type="Pharos" id="P10412">
    <property type="development level" value="Tbio"/>
</dbReference>
<dbReference type="PRO" id="PR:P10412"/>
<dbReference type="Proteomes" id="UP000005640">
    <property type="component" value="Chromosome 6"/>
</dbReference>
<dbReference type="RNAct" id="P10412">
    <property type="molecule type" value="protein"/>
</dbReference>
<dbReference type="Bgee" id="ENSG00000168298">
    <property type="expression patterns" value="Expressed in calcaneal tendon and 109 other cell types or tissues"/>
</dbReference>
<dbReference type="ExpressionAtlas" id="P10412">
    <property type="expression patterns" value="baseline and differential"/>
</dbReference>
<dbReference type="GO" id="GO:0000791">
    <property type="term" value="C:euchromatin"/>
    <property type="evidence" value="ECO:0000318"/>
    <property type="project" value="GO_Central"/>
</dbReference>
<dbReference type="GO" id="GO:0000792">
    <property type="term" value="C:heterochromatin"/>
    <property type="evidence" value="ECO:0000314"/>
    <property type="project" value="UniProtKB"/>
</dbReference>
<dbReference type="GO" id="GO:0000786">
    <property type="term" value="C:nucleosome"/>
    <property type="evidence" value="ECO:0007669"/>
    <property type="project" value="InterPro"/>
</dbReference>
<dbReference type="GO" id="GO:0005634">
    <property type="term" value="C:nucleus"/>
    <property type="evidence" value="ECO:0000314"/>
    <property type="project" value="UniProtKB"/>
</dbReference>
<dbReference type="GO" id="GO:0031490">
    <property type="term" value="F:chromatin DNA binding"/>
    <property type="evidence" value="ECO:0000315"/>
    <property type="project" value="UniProtKB"/>
</dbReference>
<dbReference type="GO" id="GO:0003690">
    <property type="term" value="F:double-stranded DNA binding"/>
    <property type="evidence" value="ECO:0000318"/>
    <property type="project" value="GO_Central"/>
</dbReference>
<dbReference type="GO" id="GO:0042826">
    <property type="term" value="F:histone deacetylase binding"/>
    <property type="evidence" value="ECO:0000353"/>
    <property type="project" value="BHF-UCL"/>
</dbReference>
<dbReference type="GO" id="GO:0031492">
    <property type="term" value="F:nucleosomal DNA binding"/>
    <property type="evidence" value="ECO:0000318"/>
    <property type="project" value="GO_Central"/>
</dbReference>
<dbReference type="GO" id="GO:0003723">
    <property type="term" value="F:RNA binding"/>
    <property type="evidence" value="ECO:0007005"/>
    <property type="project" value="UniProtKB"/>
</dbReference>
<dbReference type="GO" id="GO:0030527">
    <property type="term" value="F:structural constituent of chromatin"/>
    <property type="evidence" value="ECO:0007669"/>
    <property type="project" value="Ensembl"/>
</dbReference>
<dbReference type="GO" id="GO:0030261">
    <property type="term" value="P:chromosome condensation"/>
    <property type="evidence" value="ECO:0000318"/>
    <property type="project" value="GO_Central"/>
</dbReference>
<dbReference type="GO" id="GO:0045910">
    <property type="term" value="P:negative regulation of DNA recombination"/>
    <property type="evidence" value="ECO:0000318"/>
    <property type="project" value="GO_Central"/>
</dbReference>
<dbReference type="GO" id="GO:0000122">
    <property type="term" value="P:negative regulation of transcription by RNA polymerase II"/>
    <property type="evidence" value="ECO:0007669"/>
    <property type="project" value="Ensembl"/>
</dbReference>
<dbReference type="GO" id="GO:0006334">
    <property type="term" value="P:nucleosome assembly"/>
    <property type="evidence" value="ECO:0007669"/>
    <property type="project" value="InterPro"/>
</dbReference>
<dbReference type="CDD" id="cd00073">
    <property type="entry name" value="H15"/>
    <property type="match status" value="1"/>
</dbReference>
<dbReference type="FunFam" id="1.10.10.10:FF:000075">
    <property type="entry name" value="Histone H1 like"/>
    <property type="match status" value="1"/>
</dbReference>
<dbReference type="Gene3D" id="1.10.10.10">
    <property type="entry name" value="Winged helix-like DNA-binding domain superfamily/Winged helix DNA-binding domain"/>
    <property type="match status" value="1"/>
</dbReference>
<dbReference type="IDEAL" id="IID00538"/>
<dbReference type="InterPro" id="IPR005819">
    <property type="entry name" value="H1/H5"/>
</dbReference>
<dbReference type="InterPro" id="IPR005818">
    <property type="entry name" value="Histone_H1/H5_H15"/>
</dbReference>
<dbReference type="InterPro" id="IPR036388">
    <property type="entry name" value="WH-like_DNA-bd_sf"/>
</dbReference>
<dbReference type="InterPro" id="IPR036390">
    <property type="entry name" value="WH_DNA-bd_sf"/>
</dbReference>
<dbReference type="Pfam" id="PF00538">
    <property type="entry name" value="Linker_histone"/>
    <property type="match status" value="1"/>
</dbReference>
<dbReference type="PRINTS" id="PR00624">
    <property type="entry name" value="HISTONEH5"/>
</dbReference>
<dbReference type="SMART" id="SM00526">
    <property type="entry name" value="H15"/>
    <property type="match status" value="1"/>
</dbReference>
<dbReference type="SUPFAM" id="SSF46785">
    <property type="entry name" value="Winged helix' DNA-binding domain"/>
    <property type="match status" value="1"/>
</dbReference>
<dbReference type="PROSITE" id="PS51504">
    <property type="entry name" value="H15"/>
    <property type="match status" value="1"/>
</dbReference>
<evidence type="ECO:0000250" key="1"/>
<evidence type="ECO:0000250" key="2">
    <source>
        <dbReference type="UniProtKB" id="P15865"/>
    </source>
</evidence>
<evidence type="ECO:0000250" key="3">
    <source>
        <dbReference type="UniProtKB" id="P43274"/>
    </source>
</evidence>
<evidence type="ECO:0000250" key="4">
    <source>
        <dbReference type="UniProtKB" id="P43275"/>
    </source>
</evidence>
<evidence type="ECO:0000250" key="5">
    <source>
        <dbReference type="UniProtKB" id="P43277"/>
    </source>
</evidence>
<evidence type="ECO:0000255" key="6">
    <source>
        <dbReference type="PROSITE-ProRule" id="PRU00837"/>
    </source>
</evidence>
<evidence type="ECO:0000256" key="7">
    <source>
        <dbReference type="SAM" id="MobiDB-lite"/>
    </source>
</evidence>
<evidence type="ECO:0000269" key="8">
    <source>
    </source>
</evidence>
<evidence type="ECO:0000269" key="9">
    <source>
    </source>
</evidence>
<evidence type="ECO:0000269" key="10">
    <source>
    </source>
</evidence>
<evidence type="ECO:0000269" key="11">
    <source>
    </source>
</evidence>
<evidence type="ECO:0000269" key="12">
    <source>
    </source>
</evidence>
<evidence type="ECO:0000312" key="13">
    <source>
        <dbReference type="HGNC" id="HGNC:4718"/>
    </source>
</evidence>
<evidence type="ECO:0007744" key="14">
    <source>
    </source>
</evidence>
<evidence type="ECO:0007744" key="15">
    <source>
    </source>
</evidence>
<evidence type="ECO:0007744" key="16">
    <source>
    </source>
</evidence>
<evidence type="ECO:0007744" key="17">
    <source>
    </source>
</evidence>
<evidence type="ECO:0007744" key="18">
    <source>
    </source>
</evidence>
<evidence type="ECO:0007744" key="19">
    <source>
    </source>
</evidence>
<evidence type="ECO:0007744" key="20">
    <source>
    </source>
</evidence>
<evidence type="ECO:0007744" key="21">
    <source>
    </source>
</evidence>
<evidence type="ECO:0007744" key="22">
    <source>
    </source>
</evidence>
<evidence type="ECO:0007744" key="23">
    <source>
    </source>
</evidence>
<evidence type="ECO:0007744" key="24">
    <source>
    </source>
</evidence>
<evidence type="ECO:0007829" key="25">
    <source>
        <dbReference type="PDB" id="3TZD"/>
    </source>
</evidence>
<evidence type="ECO:0007829" key="26">
    <source>
        <dbReference type="PDB" id="7K5Y"/>
    </source>
</evidence>
<evidence type="ECO:0007829" key="27">
    <source>
        <dbReference type="PDB" id="8H1T"/>
    </source>
</evidence>
<evidence type="ECO:0007829" key="28">
    <source>
        <dbReference type="PDB" id="8VG2"/>
    </source>
</evidence>
<accession>P10412</accession>
<accession>Q4VB25</accession>
<sequence>MSETAPAAPAAPAPAEKTPVKKKARKSAGAAKRKASGPPVSELITKAVAASKERSGVSLAALKKALAAAGYDVEKNNSRIKLGLKSLVSKGTLVQTKGTGASGSFKLNKKAASGEAKPKAKKAGAAKAKKPAGAAKKPKKATGAATPKKSAKKTPKKAKKPAAAAGAKKAKSPKKAKAAKPKKAPKSPAKAKAVKPKAAKPKTAKPKAAKPKKAAAKKK</sequence>
<feature type="initiator methionine" description="Removed" evidence="12 17 18 19 20 21 24">
    <location>
        <position position="1"/>
    </location>
</feature>
<feature type="chain" id="PRO_0000195908" description="Histone H1.4">
    <location>
        <begin position="2"/>
        <end position="219"/>
    </location>
</feature>
<feature type="domain" description="H15" evidence="6">
    <location>
        <begin position="36"/>
        <end position="109"/>
    </location>
</feature>
<feature type="region of interest" description="Disordered" evidence="7">
    <location>
        <begin position="1"/>
        <end position="41"/>
    </location>
</feature>
<feature type="region of interest" description="Disordered" evidence="7">
    <location>
        <begin position="92"/>
        <end position="219"/>
    </location>
</feature>
<feature type="compositionally biased region" description="Low complexity" evidence="7">
    <location>
        <begin position="1"/>
        <end position="15"/>
    </location>
</feature>
<feature type="compositionally biased region" description="Basic residues" evidence="7">
    <location>
        <begin position="20"/>
        <end position="35"/>
    </location>
</feature>
<feature type="compositionally biased region" description="Basic residues" evidence="7">
    <location>
        <begin position="119"/>
        <end position="140"/>
    </location>
</feature>
<feature type="compositionally biased region" description="Basic residues" evidence="7">
    <location>
        <begin position="149"/>
        <end position="160"/>
    </location>
</feature>
<feature type="compositionally biased region" description="Basic residues" evidence="7">
    <location>
        <begin position="168"/>
        <end position="185"/>
    </location>
</feature>
<feature type="compositionally biased region" description="Basic residues" evidence="7">
    <location>
        <begin position="192"/>
        <end position="219"/>
    </location>
</feature>
<feature type="modified residue" description="N-acetylserine" evidence="17 18 19 20 21 24">
    <location>
        <position position="2"/>
    </location>
</feature>
<feature type="modified residue" description="Phosphoserine" evidence="2">
    <location>
        <position position="2"/>
    </location>
</feature>
<feature type="modified residue" description="N6-acetyllysine" evidence="3">
    <location>
        <position position="17"/>
    </location>
</feature>
<feature type="modified residue" description="Phosphothreonine" evidence="14 15 16 18 19 22 23">
    <location>
        <position position="18"/>
    </location>
</feature>
<feature type="modified residue" description="N6-acetyllysine; alternate" evidence="8">
    <location>
        <position position="26"/>
    </location>
</feature>
<feature type="modified residue" description="N6-methyllysine; alternate" evidence="12">
    <location>
        <position position="26"/>
    </location>
</feature>
<feature type="modified residue" description="N6-(beta-hydroxybutyryl)lysine; alternate" evidence="5">
    <location>
        <position position="34"/>
    </location>
</feature>
<feature type="modified residue" description="N6-succinyllysine; alternate" evidence="3">
    <location>
        <position position="34"/>
    </location>
</feature>
<feature type="modified residue" description="Phosphoserine" evidence="3">
    <location>
        <position position="36"/>
    </location>
</feature>
<feature type="modified residue" description="N6-(beta-hydroxybutyryl)lysine" evidence="5">
    <location>
        <position position="52"/>
    </location>
</feature>
<feature type="modified residue" description="Citrulline" evidence="3">
    <location>
        <position position="54"/>
    </location>
</feature>
<feature type="modified residue" description="N6-(beta-hydroxybutyryl)lysine" evidence="5">
    <location>
        <position position="64"/>
    </location>
</feature>
<feature type="modified residue" description="N6-(beta-hydroxybutyryl)lysine" evidence="5">
    <location>
        <position position="85"/>
    </location>
</feature>
<feature type="modified residue" description="N6-(beta-hydroxybutyryl)lysine" evidence="5">
    <location>
        <position position="90"/>
    </location>
</feature>
<feature type="modified residue" description="N6-(beta-hydroxybutyryl)lysine" evidence="5">
    <location>
        <position position="106"/>
    </location>
</feature>
<feature type="modified residue" description="Phosphothreonine" evidence="18">
    <location>
        <position position="146"/>
    </location>
</feature>
<feature type="modified residue" description="ADP-ribosylserine" evidence="10">
    <location>
        <position position="150"/>
    </location>
</feature>
<feature type="modified residue" description="Phosphoserine" evidence="14 18 19">
    <location>
        <position position="187"/>
    </location>
</feature>
<feature type="sequence variant" id="VAR_036203" description="In a colorectal cancer sample; somatic mutation; dbSNP:rs768731472." evidence="9">
    <original>A</original>
    <variation>V</variation>
    <location>
        <position position="128"/>
    </location>
</feature>
<feature type="sequence variant" id="VAR_049307" description="In dbSNP:rs2298090.">
    <original>K</original>
    <variation>R</variation>
    <location>
        <position position="152"/>
    </location>
</feature>
<feature type="strand" evidence="25">
    <location>
        <begin position="20"/>
        <end position="25"/>
    </location>
</feature>
<feature type="helix" evidence="26">
    <location>
        <begin position="40"/>
        <end position="51"/>
    </location>
</feature>
<feature type="strand" evidence="27">
    <location>
        <begin position="53"/>
        <end position="55"/>
    </location>
</feature>
<feature type="helix" evidence="26">
    <location>
        <begin position="59"/>
        <end position="69"/>
    </location>
</feature>
<feature type="helix" evidence="26">
    <location>
        <begin position="73"/>
        <end position="75"/>
    </location>
</feature>
<feature type="helix" evidence="26">
    <location>
        <begin position="77"/>
        <end position="89"/>
    </location>
</feature>
<feature type="strand" evidence="26">
    <location>
        <begin position="92"/>
        <end position="95"/>
    </location>
</feature>
<feature type="strand" evidence="28">
    <location>
        <begin position="97"/>
        <end position="99"/>
    </location>
</feature>
<feature type="strand" evidence="26">
    <location>
        <begin position="102"/>
        <end position="107"/>
    </location>
</feature>